<sequence length="140" mass="15152">MSTIRCDIVSAEKEIFHGEATLVVATGELGELGIAPKHAPLITRLKPGKVVVTTANGEQLDFAISGGILEVQPQVVTILVDTAVRAQDIDEAAVRKVKEEAERLLANRGNTVDVAEAQRQLAEATVQLQALERLRRNLKH</sequence>
<gene>
    <name evidence="1" type="primary">atpC</name>
    <name type="ordered locus">XAC3648</name>
</gene>
<accession>Q8PGG8</accession>
<reference key="1">
    <citation type="journal article" date="2002" name="Nature">
        <title>Comparison of the genomes of two Xanthomonas pathogens with differing host specificities.</title>
        <authorList>
            <person name="da Silva A.C.R."/>
            <person name="Ferro J.A."/>
            <person name="Reinach F.C."/>
            <person name="Farah C.S."/>
            <person name="Furlan L.R."/>
            <person name="Quaggio R.B."/>
            <person name="Monteiro-Vitorello C.B."/>
            <person name="Van Sluys M.A."/>
            <person name="Almeida N.F. Jr."/>
            <person name="Alves L.M.C."/>
            <person name="do Amaral A.M."/>
            <person name="Bertolini M.C."/>
            <person name="Camargo L.E.A."/>
            <person name="Camarotte G."/>
            <person name="Cannavan F."/>
            <person name="Cardozo J."/>
            <person name="Chambergo F."/>
            <person name="Ciapina L.P."/>
            <person name="Cicarelli R.M.B."/>
            <person name="Coutinho L.L."/>
            <person name="Cursino-Santos J.R."/>
            <person name="El-Dorry H."/>
            <person name="Faria J.B."/>
            <person name="Ferreira A.J.S."/>
            <person name="Ferreira R.C.C."/>
            <person name="Ferro M.I.T."/>
            <person name="Formighieri E.F."/>
            <person name="Franco M.C."/>
            <person name="Greggio C.C."/>
            <person name="Gruber A."/>
            <person name="Katsuyama A.M."/>
            <person name="Kishi L.T."/>
            <person name="Leite R.P."/>
            <person name="Lemos E.G.M."/>
            <person name="Lemos M.V.F."/>
            <person name="Locali E.C."/>
            <person name="Machado M.A."/>
            <person name="Madeira A.M.B.N."/>
            <person name="Martinez-Rossi N.M."/>
            <person name="Martins E.C."/>
            <person name="Meidanis J."/>
            <person name="Menck C.F.M."/>
            <person name="Miyaki C.Y."/>
            <person name="Moon D.H."/>
            <person name="Moreira L.M."/>
            <person name="Novo M.T.M."/>
            <person name="Okura V.K."/>
            <person name="Oliveira M.C."/>
            <person name="Oliveira V.R."/>
            <person name="Pereira H.A."/>
            <person name="Rossi A."/>
            <person name="Sena J.A.D."/>
            <person name="Silva C."/>
            <person name="de Souza R.F."/>
            <person name="Spinola L.A.F."/>
            <person name="Takita M.A."/>
            <person name="Tamura R.E."/>
            <person name="Teixeira E.C."/>
            <person name="Tezza R.I.D."/>
            <person name="Trindade dos Santos M."/>
            <person name="Truffi D."/>
            <person name="Tsai S.M."/>
            <person name="White F.F."/>
            <person name="Setubal J.C."/>
            <person name="Kitajima J.P."/>
        </authorList>
    </citation>
    <scope>NUCLEOTIDE SEQUENCE [LARGE SCALE GENOMIC DNA]</scope>
    <source>
        <strain>306</strain>
    </source>
</reference>
<evidence type="ECO:0000255" key="1">
    <source>
        <dbReference type="HAMAP-Rule" id="MF_00530"/>
    </source>
</evidence>
<organism>
    <name type="scientific">Xanthomonas axonopodis pv. citri (strain 306)</name>
    <dbReference type="NCBI Taxonomy" id="190486"/>
    <lineage>
        <taxon>Bacteria</taxon>
        <taxon>Pseudomonadati</taxon>
        <taxon>Pseudomonadota</taxon>
        <taxon>Gammaproteobacteria</taxon>
        <taxon>Lysobacterales</taxon>
        <taxon>Lysobacteraceae</taxon>
        <taxon>Xanthomonas</taxon>
    </lineage>
</organism>
<name>ATPE_XANAC</name>
<feature type="chain" id="PRO_0000188242" description="ATP synthase epsilon chain">
    <location>
        <begin position="1"/>
        <end position="140"/>
    </location>
</feature>
<protein>
    <recommendedName>
        <fullName evidence="1">ATP synthase epsilon chain</fullName>
    </recommendedName>
    <alternativeName>
        <fullName evidence="1">ATP synthase F1 sector epsilon subunit</fullName>
    </alternativeName>
    <alternativeName>
        <fullName evidence="1">F-ATPase epsilon subunit</fullName>
    </alternativeName>
</protein>
<proteinExistence type="inferred from homology"/>
<comment type="function">
    <text evidence="1">Produces ATP from ADP in the presence of a proton gradient across the membrane.</text>
</comment>
<comment type="subunit">
    <text>F-type ATPases have 2 components, CF(1) - the catalytic core - and CF(0) - the membrane proton channel. CF(1) has five subunits: alpha(3), beta(3), gamma(1), delta(1), epsilon(1). CF(0) has three main subunits: a, b and c.</text>
</comment>
<comment type="subcellular location">
    <subcellularLocation>
        <location evidence="1">Cell inner membrane</location>
        <topology evidence="1">Peripheral membrane protein</topology>
    </subcellularLocation>
</comment>
<comment type="similarity">
    <text evidence="1">Belongs to the ATPase epsilon chain family.</text>
</comment>
<keyword id="KW-0066">ATP synthesis</keyword>
<keyword id="KW-0997">Cell inner membrane</keyword>
<keyword id="KW-1003">Cell membrane</keyword>
<keyword id="KW-0139">CF(1)</keyword>
<keyword id="KW-0375">Hydrogen ion transport</keyword>
<keyword id="KW-0406">Ion transport</keyword>
<keyword id="KW-0472">Membrane</keyword>
<keyword id="KW-0813">Transport</keyword>
<dbReference type="EMBL" id="AE008923">
    <property type="protein sequence ID" value="AAM38491.1"/>
    <property type="molecule type" value="Genomic_DNA"/>
</dbReference>
<dbReference type="RefSeq" id="WP_003484011.1">
    <property type="nucleotide sequence ID" value="NC_003919.1"/>
</dbReference>
<dbReference type="SMR" id="Q8PGG8"/>
<dbReference type="KEGG" id="xac:XAC3648"/>
<dbReference type="eggNOG" id="COG0355">
    <property type="taxonomic scope" value="Bacteria"/>
</dbReference>
<dbReference type="HOGENOM" id="CLU_084338_2_0_6"/>
<dbReference type="Proteomes" id="UP000000576">
    <property type="component" value="Chromosome"/>
</dbReference>
<dbReference type="GO" id="GO:0005886">
    <property type="term" value="C:plasma membrane"/>
    <property type="evidence" value="ECO:0007669"/>
    <property type="project" value="UniProtKB-SubCell"/>
</dbReference>
<dbReference type="GO" id="GO:0045259">
    <property type="term" value="C:proton-transporting ATP synthase complex"/>
    <property type="evidence" value="ECO:0007669"/>
    <property type="project" value="UniProtKB-KW"/>
</dbReference>
<dbReference type="GO" id="GO:0005524">
    <property type="term" value="F:ATP binding"/>
    <property type="evidence" value="ECO:0007669"/>
    <property type="project" value="UniProtKB-UniRule"/>
</dbReference>
<dbReference type="GO" id="GO:0046933">
    <property type="term" value="F:proton-transporting ATP synthase activity, rotational mechanism"/>
    <property type="evidence" value="ECO:0007669"/>
    <property type="project" value="UniProtKB-UniRule"/>
</dbReference>
<dbReference type="CDD" id="cd12152">
    <property type="entry name" value="F1-ATPase_delta"/>
    <property type="match status" value="1"/>
</dbReference>
<dbReference type="FunFam" id="1.20.5.440:FF:000005">
    <property type="entry name" value="ATP synthase epsilon chain"/>
    <property type="match status" value="1"/>
</dbReference>
<dbReference type="FunFam" id="2.60.15.10:FF:000001">
    <property type="entry name" value="ATP synthase epsilon chain"/>
    <property type="match status" value="1"/>
</dbReference>
<dbReference type="Gene3D" id="1.20.5.440">
    <property type="entry name" value="ATP synthase delta/epsilon subunit, C-terminal domain"/>
    <property type="match status" value="1"/>
</dbReference>
<dbReference type="Gene3D" id="2.60.15.10">
    <property type="entry name" value="F0F1 ATP synthase delta/epsilon subunit, N-terminal"/>
    <property type="match status" value="1"/>
</dbReference>
<dbReference type="HAMAP" id="MF_00530">
    <property type="entry name" value="ATP_synth_epsil_bac"/>
    <property type="match status" value="1"/>
</dbReference>
<dbReference type="InterPro" id="IPR036794">
    <property type="entry name" value="ATP_F1_dsu/esu_C_sf"/>
</dbReference>
<dbReference type="InterPro" id="IPR001469">
    <property type="entry name" value="ATP_synth_F1_dsu/esu"/>
</dbReference>
<dbReference type="InterPro" id="IPR020546">
    <property type="entry name" value="ATP_synth_F1_dsu/esu_N"/>
</dbReference>
<dbReference type="InterPro" id="IPR020547">
    <property type="entry name" value="ATP_synth_F1_esu_C"/>
</dbReference>
<dbReference type="InterPro" id="IPR036771">
    <property type="entry name" value="ATPsynth_dsu/esu_N"/>
</dbReference>
<dbReference type="NCBIfam" id="TIGR01216">
    <property type="entry name" value="ATP_synt_epsi"/>
    <property type="match status" value="1"/>
</dbReference>
<dbReference type="NCBIfam" id="NF001847">
    <property type="entry name" value="PRK00571.1-4"/>
    <property type="match status" value="1"/>
</dbReference>
<dbReference type="PANTHER" id="PTHR13822">
    <property type="entry name" value="ATP SYNTHASE DELTA/EPSILON CHAIN"/>
    <property type="match status" value="1"/>
</dbReference>
<dbReference type="PANTHER" id="PTHR13822:SF10">
    <property type="entry name" value="ATP SYNTHASE EPSILON CHAIN, CHLOROPLASTIC"/>
    <property type="match status" value="1"/>
</dbReference>
<dbReference type="Pfam" id="PF00401">
    <property type="entry name" value="ATP-synt_DE"/>
    <property type="match status" value="1"/>
</dbReference>
<dbReference type="Pfam" id="PF02823">
    <property type="entry name" value="ATP-synt_DE_N"/>
    <property type="match status" value="1"/>
</dbReference>
<dbReference type="SUPFAM" id="SSF46604">
    <property type="entry name" value="Epsilon subunit of F1F0-ATP synthase C-terminal domain"/>
    <property type="match status" value="1"/>
</dbReference>
<dbReference type="SUPFAM" id="SSF51344">
    <property type="entry name" value="Epsilon subunit of F1F0-ATP synthase N-terminal domain"/>
    <property type="match status" value="1"/>
</dbReference>